<feature type="chain" id="PRO_0000444012" description="Lectin SfL-1" evidence="4">
    <location>
        <begin position="1"/>
        <end position="267"/>
    </location>
</feature>
<feature type="repeat" description="1" evidence="3">
    <location>
        <begin position="1"/>
        <end position="67"/>
    </location>
</feature>
<feature type="repeat" description="2" evidence="3">
    <location>
        <begin position="68"/>
        <end position="135"/>
    </location>
</feature>
<feature type="repeat" description="3" evidence="3">
    <location>
        <begin position="136"/>
        <end position="202"/>
    </location>
</feature>
<feature type="repeat" description="4" evidence="3">
    <location>
        <begin position="203"/>
        <end position="267"/>
    </location>
</feature>
<feature type="region of interest" description="4 X approximate tandem repeats" evidence="3">
    <location>
        <begin position="1"/>
        <end position="267"/>
    </location>
</feature>
<name>LEC1_SOLFI</name>
<proteinExistence type="evidence at protein level"/>
<dbReference type="PDB" id="7UMJ">
    <property type="method" value="X-ray"/>
    <property type="resolution" value="1.88 A"/>
    <property type="chains" value="AA=1-267"/>
</dbReference>
<dbReference type="PDBsum" id="7UMJ"/>
<dbReference type="SMR" id="C0HL89"/>
<dbReference type="UniLectin" id="C0HL89"/>
<dbReference type="GO" id="GO:0005537">
    <property type="term" value="F:D-mannose binding"/>
    <property type="evidence" value="ECO:0007669"/>
    <property type="project" value="UniProtKB-KW"/>
</dbReference>
<dbReference type="Gene3D" id="2.40.128.450">
    <property type="match status" value="2"/>
</dbReference>
<dbReference type="InterPro" id="IPR053726">
    <property type="entry name" value="Bacterial_Lectin_Domain_sf"/>
</dbReference>
<dbReference type="InterPro" id="IPR040964">
    <property type="entry name" value="SBD"/>
</dbReference>
<dbReference type="Pfam" id="PF17882">
    <property type="entry name" value="SBD"/>
    <property type="match status" value="4"/>
</dbReference>
<evidence type="ECO:0000250" key="1">
    <source>
        <dbReference type="UniProtKB" id="P84331"/>
    </source>
</evidence>
<evidence type="ECO:0000269" key="2">
    <source>
    </source>
</evidence>
<evidence type="ECO:0000303" key="3">
    <source>
    </source>
</evidence>
<evidence type="ECO:0000305" key="4"/>
<protein>
    <recommendedName>
        <fullName evidence="3">Lectin SfL-1</fullName>
    </recommendedName>
</protein>
<comment type="function">
    <text evidence="1">Lectin specific for high mannose N-glycans, recognizes the branched moiety of these glycans. Does not recognize other types of N-glycans or monosaccharides.</text>
</comment>
<comment type="subunit">
    <text evidence="2">Monomer.</text>
</comment>
<comment type="mass spectrometry"/>
<comment type="similarity">
    <text evidence="4">Belongs to the bacterial lectin family.</text>
</comment>
<organism>
    <name type="scientific">Solieria filiformis</name>
    <name type="common">Red alga</name>
    <name type="synonym">Euhymenia filiformis</name>
    <dbReference type="NCBI Taxonomy" id="31449"/>
    <lineage>
        <taxon>Eukaryota</taxon>
        <taxon>Rhodophyta</taxon>
        <taxon>Florideophyceae</taxon>
        <taxon>Rhodymeniophycidae</taxon>
        <taxon>Gigartinales</taxon>
        <taxon>Solieriaceae</taxon>
        <taxon>Solieria</taxon>
    </lineage>
</organism>
<accession>C0HL89</accession>
<keyword id="KW-0002">3D-structure</keyword>
<keyword id="KW-0903">Direct protein sequencing</keyword>
<keyword id="KW-0430">Lectin</keyword>
<keyword id="KW-0465">Mannose-binding</keyword>
<keyword id="KW-0677">Repeat</keyword>
<reference evidence="4" key="1">
    <citation type="journal article" date="2018" name="Int. J. Biol. Macromol.">
        <title>Structural characterization of two isolectins from the marine red alga Solieria filiformis (Kuetzing) P.W. Gabrielson and their anticancer effect on MCF-7 breast cancer cells.</title>
        <authorList>
            <person name="Chaves R.P."/>
            <person name="Silva S.R.D."/>
            <person name="Nascimento Neto L.G."/>
            <person name="Carneiro R.F."/>
            <person name="Silva A.L.C.D."/>
            <person name="Sampaio A.H."/>
            <person name="Sousa B.L."/>
            <person name="Cabral M.G."/>
            <person name="Videira P.A."/>
            <person name="Teixeira E.H."/>
            <person name="Nagano C.S."/>
        </authorList>
    </citation>
    <scope>NUCLEOTIDE SEQUENCE [MRNA]</scope>
    <scope>PROTEIN SEQUENCE OF 1-12</scope>
    <scope>MASS SPECTROMETRY</scope>
    <scope>IDENTIFICATION BY MASS SPECTROMETRY</scope>
</reference>
<sequence>GRYTVQNQWGGSSAPWNDAGLWLLGSRANQNVMDVSVTSSDGGATLTGTMTYSGEGPIGFKGTRRGDSNNYDVENQWGGSSAPWHAGGTFVIGSRSGQGVVAVDVNSSDGGKTLTGTMTYANEGPIGFKGTQSGGDSYNVENQWGGSSAPWNKAGAWALGDRDGQGVIGVDVTSSDGGKTLTGTMQYQNEGPIGFKGTSTGGSNYKVENQWGGSSAPWNPAGNWLIGDRHNQNIVAVKVTSSDNGKTLGGTCTYEREGPIGFKGTAI</sequence>